<feature type="chain" id="PRO_1000134061" description="2,3,4,5-tetrahydropyridine-2,6-dicarboxylate N-succinyltransferase">
    <location>
        <begin position="1"/>
        <end position="286"/>
    </location>
</feature>
<gene>
    <name evidence="1" type="primary">dapD</name>
    <name type="ordered locus">Rleg2_0062</name>
</gene>
<name>DAPD_RHILW</name>
<sequence length="286" mass="30318">MSATDLASLEKTIEAAFDNRDNVNTSTKGEVRDAVEAALDLLDAGKVRVATRGADGAWTVNQWLKKAVLLSFRLNDMDVVKGGSGNSTWWDKVPSKFEGWGENHFRAAGFRAVPNCVVRRSAYIAPNAILMPSFVNLGAYVGEGTMVDTWATVGSCAQIGKHVHLSGGVGIGGVLEPMQAGPTIIEDNCFIGARSEVVEGCIVREGSVLGMGVFIGKSTKIVDRATGEVSYGEVPPYSVVVAGSMPSGNATMGNGKPAPHLYCAVIVKRVDEQTRSKTGINELLRD</sequence>
<organism>
    <name type="scientific">Rhizobium leguminosarum bv. trifolii (strain WSM2304)</name>
    <dbReference type="NCBI Taxonomy" id="395492"/>
    <lineage>
        <taxon>Bacteria</taxon>
        <taxon>Pseudomonadati</taxon>
        <taxon>Pseudomonadota</taxon>
        <taxon>Alphaproteobacteria</taxon>
        <taxon>Hyphomicrobiales</taxon>
        <taxon>Rhizobiaceae</taxon>
        <taxon>Rhizobium/Agrobacterium group</taxon>
        <taxon>Rhizobium</taxon>
    </lineage>
</organism>
<proteinExistence type="inferred from homology"/>
<reference key="1">
    <citation type="journal article" date="2010" name="Stand. Genomic Sci.">
        <title>Complete genome sequence of Rhizobium leguminosarum bv trifolii strain WSM2304, an effective microsymbiont of the South American clover Trifolium polymorphum.</title>
        <authorList>
            <person name="Reeve W."/>
            <person name="O'Hara G."/>
            <person name="Chain P."/>
            <person name="Ardley J."/>
            <person name="Brau L."/>
            <person name="Nandesena K."/>
            <person name="Tiwari R."/>
            <person name="Malfatti S."/>
            <person name="Kiss H."/>
            <person name="Lapidus A."/>
            <person name="Copeland A."/>
            <person name="Nolan M."/>
            <person name="Land M."/>
            <person name="Ivanova N."/>
            <person name="Mavromatis K."/>
            <person name="Markowitz V."/>
            <person name="Kyrpides N."/>
            <person name="Melino V."/>
            <person name="Denton M."/>
            <person name="Yates R."/>
            <person name="Howieson J."/>
        </authorList>
    </citation>
    <scope>NUCLEOTIDE SEQUENCE [LARGE SCALE GENOMIC DNA]</scope>
    <source>
        <strain>WSM2304</strain>
    </source>
</reference>
<keyword id="KW-0012">Acyltransferase</keyword>
<keyword id="KW-0028">Amino-acid biosynthesis</keyword>
<keyword id="KW-0963">Cytoplasm</keyword>
<keyword id="KW-0220">Diaminopimelate biosynthesis</keyword>
<keyword id="KW-0457">Lysine biosynthesis</keyword>
<keyword id="KW-1185">Reference proteome</keyword>
<keyword id="KW-0677">Repeat</keyword>
<keyword id="KW-0808">Transferase</keyword>
<dbReference type="EC" id="2.3.1.117" evidence="1"/>
<dbReference type="EMBL" id="CP001191">
    <property type="protein sequence ID" value="ACI53365.1"/>
    <property type="molecule type" value="Genomic_DNA"/>
</dbReference>
<dbReference type="RefSeq" id="WP_012556408.1">
    <property type="nucleotide sequence ID" value="NC_011369.1"/>
</dbReference>
<dbReference type="SMR" id="B5ZN24"/>
<dbReference type="STRING" id="395492.Rleg2_0062"/>
<dbReference type="KEGG" id="rlt:Rleg2_0062"/>
<dbReference type="eggNOG" id="COG2171">
    <property type="taxonomic scope" value="Bacteria"/>
</dbReference>
<dbReference type="HOGENOM" id="CLU_050859_0_1_5"/>
<dbReference type="UniPathway" id="UPA00034">
    <property type="reaction ID" value="UER00019"/>
</dbReference>
<dbReference type="Proteomes" id="UP000008330">
    <property type="component" value="Chromosome"/>
</dbReference>
<dbReference type="GO" id="GO:0005737">
    <property type="term" value="C:cytoplasm"/>
    <property type="evidence" value="ECO:0007669"/>
    <property type="project" value="UniProtKB-SubCell"/>
</dbReference>
<dbReference type="GO" id="GO:0008666">
    <property type="term" value="F:2,3,4,5-tetrahydropyridine-2,6-dicarboxylate N-succinyltransferase activity"/>
    <property type="evidence" value="ECO:0007669"/>
    <property type="project" value="UniProtKB-UniRule"/>
</dbReference>
<dbReference type="GO" id="GO:0016779">
    <property type="term" value="F:nucleotidyltransferase activity"/>
    <property type="evidence" value="ECO:0007669"/>
    <property type="project" value="TreeGrafter"/>
</dbReference>
<dbReference type="GO" id="GO:0019877">
    <property type="term" value="P:diaminopimelate biosynthetic process"/>
    <property type="evidence" value="ECO:0007669"/>
    <property type="project" value="UniProtKB-UniRule"/>
</dbReference>
<dbReference type="GO" id="GO:0009089">
    <property type="term" value="P:lysine biosynthetic process via diaminopimelate"/>
    <property type="evidence" value="ECO:0007669"/>
    <property type="project" value="UniProtKB-UniRule"/>
</dbReference>
<dbReference type="CDD" id="cd03350">
    <property type="entry name" value="LbH_THP_succinylT"/>
    <property type="match status" value="1"/>
</dbReference>
<dbReference type="Gene3D" id="2.160.10.10">
    <property type="entry name" value="Hexapeptide repeat proteins"/>
    <property type="match status" value="1"/>
</dbReference>
<dbReference type="Gene3D" id="1.10.166.10">
    <property type="entry name" value="Tetrahydrodipicolinate-N-succinyltransferase, N-terminal domain"/>
    <property type="match status" value="1"/>
</dbReference>
<dbReference type="HAMAP" id="MF_00811">
    <property type="entry name" value="DapD"/>
    <property type="match status" value="1"/>
</dbReference>
<dbReference type="InterPro" id="IPR005664">
    <property type="entry name" value="DapD_Trfase_Hexpep_rpt_fam"/>
</dbReference>
<dbReference type="InterPro" id="IPR001451">
    <property type="entry name" value="Hexapep"/>
</dbReference>
<dbReference type="InterPro" id="IPR018357">
    <property type="entry name" value="Hexapep_transf_CS"/>
</dbReference>
<dbReference type="InterPro" id="IPR023180">
    <property type="entry name" value="THP_succinylTrfase_dom1"/>
</dbReference>
<dbReference type="InterPro" id="IPR037133">
    <property type="entry name" value="THP_succinylTrfase_N_sf"/>
</dbReference>
<dbReference type="InterPro" id="IPR011004">
    <property type="entry name" value="Trimer_LpxA-like_sf"/>
</dbReference>
<dbReference type="NCBIfam" id="TIGR00965">
    <property type="entry name" value="dapD"/>
    <property type="match status" value="1"/>
</dbReference>
<dbReference type="NCBIfam" id="NF008808">
    <property type="entry name" value="PRK11830.1"/>
    <property type="match status" value="1"/>
</dbReference>
<dbReference type="PANTHER" id="PTHR19136:SF52">
    <property type="entry name" value="2,3,4,5-TETRAHYDROPYRIDINE-2,6-DICARBOXYLATE N-SUCCINYLTRANSFERASE"/>
    <property type="match status" value="1"/>
</dbReference>
<dbReference type="PANTHER" id="PTHR19136">
    <property type="entry name" value="MOLYBDENUM COFACTOR GUANYLYLTRANSFERASE"/>
    <property type="match status" value="1"/>
</dbReference>
<dbReference type="Pfam" id="PF14602">
    <property type="entry name" value="Hexapep_2"/>
    <property type="match status" value="1"/>
</dbReference>
<dbReference type="Pfam" id="PF14805">
    <property type="entry name" value="THDPS_N_2"/>
    <property type="match status" value="1"/>
</dbReference>
<dbReference type="SUPFAM" id="SSF51161">
    <property type="entry name" value="Trimeric LpxA-like enzymes"/>
    <property type="match status" value="1"/>
</dbReference>
<dbReference type="PROSITE" id="PS00101">
    <property type="entry name" value="HEXAPEP_TRANSFERASES"/>
    <property type="match status" value="1"/>
</dbReference>
<protein>
    <recommendedName>
        <fullName evidence="1">2,3,4,5-tetrahydropyridine-2,6-dicarboxylate N-succinyltransferase</fullName>
        <ecNumber evidence="1">2.3.1.117</ecNumber>
    </recommendedName>
    <alternativeName>
        <fullName evidence="1">Tetrahydrodipicolinate N-succinyltransferase</fullName>
        <shortName evidence="1">THP succinyltransferase</shortName>
        <shortName evidence="1">Tetrahydropicolinate succinylase</shortName>
    </alternativeName>
</protein>
<comment type="catalytic activity">
    <reaction evidence="1">
        <text>(S)-2,3,4,5-tetrahydrodipicolinate + succinyl-CoA + H2O = (S)-2-succinylamino-6-oxoheptanedioate + CoA</text>
        <dbReference type="Rhea" id="RHEA:17325"/>
        <dbReference type="ChEBI" id="CHEBI:15377"/>
        <dbReference type="ChEBI" id="CHEBI:15685"/>
        <dbReference type="ChEBI" id="CHEBI:16845"/>
        <dbReference type="ChEBI" id="CHEBI:57287"/>
        <dbReference type="ChEBI" id="CHEBI:57292"/>
        <dbReference type="EC" id="2.3.1.117"/>
    </reaction>
</comment>
<comment type="pathway">
    <text evidence="1">Amino-acid biosynthesis; L-lysine biosynthesis via DAP pathway; LL-2,6-diaminopimelate from (S)-tetrahydrodipicolinate (succinylase route): step 1/3.</text>
</comment>
<comment type="subcellular location">
    <subcellularLocation>
        <location evidence="1">Cytoplasm</location>
    </subcellularLocation>
</comment>
<comment type="similarity">
    <text evidence="1">Belongs to the transferase hexapeptide repeat family.</text>
</comment>
<accession>B5ZN24</accession>
<evidence type="ECO:0000255" key="1">
    <source>
        <dbReference type="HAMAP-Rule" id="MF_00811"/>
    </source>
</evidence>